<comment type="function">
    <text evidence="1">Catalyzes the transfer of a phosphate group to glutamate to form L-glutamate 5-phosphate.</text>
</comment>
<comment type="catalytic activity">
    <reaction evidence="1">
        <text>L-glutamate + ATP = L-glutamyl 5-phosphate + ADP</text>
        <dbReference type="Rhea" id="RHEA:14877"/>
        <dbReference type="ChEBI" id="CHEBI:29985"/>
        <dbReference type="ChEBI" id="CHEBI:30616"/>
        <dbReference type="ChEBI" id="CHEBI:58274"/>
        <dbReference type="ChEBI" id="CHEBI:456216"/>
        <dbReference type="EC" id="2.7.2.11"/>
    </reaction>
</comment>
<comment type="pathway">
    <text evidence="1">Amino-acid biosynthesis; L-proline biosynthesis; L-glutamate 5-semialdehyde from L-glutamate: step 1/2.</text>
</comment>
<comment type="subcellular location">
    <subcellularLocation>
        <location evidence="1">Cytoplasm</location>
    </subcellularLocation>
</comment>
<comment type="similarity">
    <text evidence="1">Belongs to the glutamate 5-kinase family.</text>
</comment>
<feature type="chain" id="PRO_1000081048" description="Glutamate 5-kinase">
    <location>
        <begin position="1"/>
        <end position="251"/>
    </location>
</feature>
<feature type="binding site" evidence="1">
    <location>
        <position position="7"/>
    </location>
    <ligand>
        <name>ATP</name>
        <dbReference type="ChEBI" id="CHEBI:30616"/>
    </ligand>
</feature>
<feature type="binding site" evidence="1">
    <location>
        <position position="45"/>
    </location>
    <ligand>
        <name>substrate</name>
    </ligand>
</feature>
<feature type="binding site" evidence="1">
    <location>
        <position position="130"/>
    </location>
    <ligand>
        <name>substrate</name>
    </ligand>
</feature>
<feature type="binding site" evidence="1">
    <location>
        <position position="142"/>
    </location>
    <ligand>
        <name>substrate</name>
    </ligand>
</feature>
<feature type="binding site" evidence="1">
    <location>
        <begin position="162"/>
        <end position="163"/>
    </location>
    <ligand>
        <name>ATP</name>
        <dbReference type="ChEBI" id="CHEBI:30616"/>
    </ligand>
</feature>
<feature type="binding site" evidence="1">
    <location>
        <begin position="204"/>
        <end position="210"/>
    </location>
    <ligand>
        <name>ATP</name>
        <dbReference type="ChEBI" id="CHEBI:30616"/>
    </ligand>
</feature>
<name>PROB_CAMJ8</name>
<reference key="1">
    <citation type="journal article" date="2007" name="J. Bacteriol.">
        <title>The complete genome sequence of Campylobacter jejuni strain 81116 (NCTC11828).</title>
        <authorList>
            <person name="Pearson B.M."/>
            <person name="Gaskin D.J.H."/>
            <person name="Segers R.P.A.M."/>
            <person name="Wells J.M."/>
            <person name="Nuijten P.J.M."/>
            <person name="van Vliet A.H.M."/>
        </authorList>
    </citation>
    <scope>NUCLEOTIDE SEQUENCE [LARGE SCALE GENOMIC DNA]</scope>
    <source>
        <strain>81116 / NCTC 11828</strain>
    </source>
</reference>
<accession>A8FJQ2</accession>
<evidence type="ECO:0000255" key="1">
    <source>
        <dbReference type="HAMAP-Rule" id="MF_00456"/>
    </source>
</evidence>
<dbReference type="EC" id="2.7.2.11" evidence="1"/>
<dbReference type="EMBL" id="CP000814">
    <property type="protein sequence ID" value="ABV51689.1"/>
    <property type="molecule type" value="Genomic_DNA"/>
</dbReference>
<dbReference type="RefSeq" id="WP_002851769.1">
    <property type="nucleotide sequence ID" value="NC_009839.1"/>
</dbReference>
<dbReference type="SMR" id="A8FJQ2"/>
<dbReference type="KEGG" id="cju:C8J_0090"/>
<dbReference type="HOGENOM" id="CLU_025400_0_0_7"/>
<dbReference type="UniPathway" id="UPA00098">
    <property type="reaction ID" value="UER00359"/>
</dbReference>
<dbReference type="GO" id="GO:0005829">
    <property type="term" value="C:cytosol"/>
    <property type="evidence" value="ECO:0007669"/>
    <property type="project" value="TreeGrafter"/>
</dbReference>
<dbReference type="GO" id="GO:0005524">
    <property type="term" value="F:ATP binding"/>
    <property type="evidence" value="ECO:0007669"/>
    <property type="project" value="UniProtKB-KW"/>
</dbReference>
<dbReference type="GO" id="GO:0004349">
    <property type="term" value="F:glutamate 5-kinase activity"/>
    <property type="evidence" value="ECO:0007669"/>
    <property type="project" value="UniProtKB-UniRule"/>
</dbReference>
<dbReference type="GO" id="GO:0055129">
    <property type="term" value="P:L-proline biosynthetic process"/>
    <property type="evidence" value="ECO:0007669"/>
    <property type="project" value="UniProtKB-UniRule"/>
</dbReference>
<dbReference type="CDD" id="cd04242">
    <property type="entry name" value="AAK_G5K_ProB"/>
    <property type="match status" value="1"/>
</dbReference>
<dbReference type="FunFam" id="3.40.1160.10:FF:000006">
    <property type="entry name" value="Glutamate 5-kinase"/>
    <property type="match status" value="1"/>
</dbReference>
<dbReference type="Gene3D" id="3.40.1160.10">
    <property type="entry name" value="Acetylglutamate kinase-like"/>
    <property type="match status" value="1"/>
</dbReference>
<dbReference type="HAMAP" id="MF_00456">
    <property type="entry name" value="ProB"/>
    <property type="match status" value="1"/>
</dbReference>
<dbReference type="InterPro" id="IPR036393">
    <property type="entry name" value="AceGlu_kinase-like_sf"/>
</dbReference>
<dbReference type="InterPro" id="IPR001048">
    <property type="entry name" value="Asp/Glu/Uridylate_kinase"/>
</dbReference>
<dbReference type="InterPro" id="IPR041739">
    <property type="entry name" value="G5K_ProB"/>
</dbReference>
<dbReference type="InterPro" id="IPR001057">
    <property type="entry name" value="Glu/AcGlu_kinase"/>
</dbReference>
<dbReference type="InterPro" id="IPR011529">
    <property type="entry name" value="Glu_5kinase"/>
</dbReference>
<dbReference type="InterPro" id="IPR005715">
    <property type="entry name" value="Glu_5kinase/COase_Synthase"/>
</dbReference>
<dbReference type="InterPro" id="IPR019797">
    <property type="entry name" value="Glutamate_5-kinase_CS"/>
</dbReference>
<dbReference type="NCBIfam" id="TIGR01027">
    <property type="entry name" value="proB"/>
    <property type="match status" value="1"/>
</dbReference>
<dbReference type="PANTHER" id="PTHR43654">
    <property type="entry name" value="GLUTAMATE 5-KINASE"/>
    <property type="match status" value="1"/>
</dbReference>
<dbReference type="PANTHER" id="PTHR43654:SF3">
    <property type="entry name" value="GLUTAMATE 5-KINASE"/>
    <property type="match status" value="1"/>
</dbReference>
<dbReference type="Pfam" id="PF00696">
    <property type="entry name" value="AA_kinase"/>
    <property type="match status" value="1"/>
</dbReference>
<dbReference type="PIRSF" id="PIRSF000729">
    <property type="entry name" value="GK"/>
    <property type="match status" value="1"/>
</dbReference>
<dbReference type="PRINTS" id="PR00474">
    <property type="entry name" value="GLU5KINASE"/>
</dbReference>
<dbReference type="SUPFAM" id="SSF53633">
    <property type="entry name" value="Carbamate kinase-like"/>
    <property type="match status" value="1"/>
</dbReference>
<dbReference type="PROSITE" id="PS00902">
    <property type="entry name" value="GLUTAMATE_5_KINASE"/>
    <property type="match status" value="1"/>
</dbReference>
<protein>
    <recommendedName>
        <fullName evidence="1">Glutamate 5-kinase</fullName>
        <ecNumber evidence="1">2.7.2.11</ecNumber>
    </recommendedName>
    <alternativeName>
        <fullName evidence="1">Gamma-glutamyl kinase</fullName>
        <shortName evidence="1">GK</shortName>
    </alternativeName>
</protein>
<keyword id="KW-0028">Amino-acid biosynthesis</keyword>
<keyword id="KW-0067">ATP-binding</keyword>
<keyword id="KW-0963">Cytoplasm</keyword>
<keyword id="KW-0418">Kinase</keyword>
<keyword id="KW-0547">Nucleotide-binding</keyword>
<keyword id="KW-0641">Proline biosynthesis</keyword>
<keyword id="KW-0808">Transferase</keyword>
<sequence length="251" mass="27843">MKRIVVKVGSHVISEENTLSFERLKNLVAFLAKLMEKYEVILVTSAAISAGHTKLDIDRKNLINKQVLAAIGQPFLISVYNELLAKFNKLGGQILLTGKDFDSRKATKHAKNAIDMMINLGILPIINENDATAIEEIVFGDNDSLSAYATHFFDADLLVILSDIDGFYDKNPSEFSDAKRLEKITHIKEEWLQATIKTGSEHGTGGIVTKLKAAKFLLEHNKKMFLASGFDLSVAKTFLLEDKQIGGTLFE</sequence>
<organism>
    <name type="scientific">Campylobacter jejuni subsp. jejuni serotype O:6 (strain 81116 / NCTC 11828)</name>
    <dbReference type="NCBI Taxonomy" id="407148"/>
    <lineage>
        <taxon>Bacteria</taxon>
        <taxon>Pseudomonadati</taxon>
        <taxon>Campylobacterota</taxon>
        <taxon>Epsilonproteobacteria</taxon>
        <taxon>Campylobacterales</taxon>
        <taxon>Campylobacteraceae</taxon>
        <taxon>Campylobacter</taxon>
    </lineage>
</organism>
<gene>
    <name evidence="1" type="primary">proB</name>
    <name type="ordered locus">C8J_0090</name>
</gene>
<proteinExistence type="inferred from homology"/>